<organism>
    <name type="scientific">Zea mays</name>
    <name type="common">Maize</name>
    <dbReference type="NCBI Taxonomy" id="4577"/>
    <lineage>
        <taxon>Eukaryota</taxon>
        <taxon>Viridiplantae</taxon>
        <taxon>Streptophyta</taxon>
        <taxon>Embryophyta</taxon>
        <taxon>Tracheophyta</taxon>
        <taxon>Spermatophyta</taxon>
        <taxon>Magnoliopsida</taxon>
        <taxon>Liliopsida</taxon>
        <taxon>Poales</taxon>
        <taxon>Poaceae</taxon>
        <taxon>PACMAD clade</taxon>
        <taxon>Panicoideae</taxon>
        <taxon>Andropogonodae</taxon>
        <taxon>Andropogoneae</taxon>
        <taxon>Tripsacinae</taxon>
        <taxon>Zea</taxon>
    </lineage>
</organism>
<name>HIP_MAIZE</name>
<evidence type="ECO:0000250" key="1">
    <source>
        <dbReference type="UniProtKB" id="Q8CGY6"/>
    </source>
</evidence>
<evidence type="ECO:0000255" key="2"/>
<evidence type="ECO:0000255" key="3">
    <source>
        <dbReference type="PROSITE-ProRule" id="PRU01081"/>
    </source>
</evidence>
<evidence type="ECO:0000256" key="4">
    <source>
        <dbReference type="SAM" id="MobiDB-lite"/>
    </source>
</evidence>
<evidence type="ECO:0000269" key="5">
    <source>
    </source>
</evidence>
<evidence type="ECO:0000269" key="6">
    <source>
    </source>
</evidence>
<evidence type="ECO:0000303" key="7">
    <source>
    </source>
</evidence>
<evidence type="ECO:0000305" key="8"/>
<evidence type="ECO:0000312" key="9">
    <source>
        <dbReference type="EMBL" id="AFW57122.1"/>
    </source>
</evidence>
<accession>K7TQE3</accession>
<feature type="chain" id="PRO_0000438209" description="HSP-interacting protein">
    <location>
        <begin position="1"/>
        <end position="741"/>
    </location>
</feature>
<feature type="repeat" description="TPR 1" evidence="2">
    <location>
        <begin position="26"/>
        <end position="59"/>
    </location>
</feature>
<feature type="repeat" description="TPR 2" evidence="2">
    <location>
        <begin position="65"/>
        <end position="100"/>
    </location>
</feature>
<feature type="repeat" description="TPR 3" evidence="2">
    <location>
        <begin position="102"/>
        <end position="134"/>
    </location>
</feature>
<feature type="domain" description="PB1" evidence="3">
    <location>
        <begin position="285"/>
        <end position="364"/>
    </location>
</feature>
<feature type="repeat" description="TPR 4" evidence="2">
    <location>
        <begin position="496"/>
        <end position="530"/>
    </location>
</feature>
<feature type="repeat" description="TPR 5" evidence="2">
    <location>
        <begin position="532"/>
        <end position="557"/>
    </location>
</feature>
<feature type="repeat" description="TPR 6" evidence="2">
    <location>
        <begin position="558"/>
        <end position="591"/>
    </location>
</feature>
<feature type="repeat" description="TPR 7" evidence="2">
    <location>
        <begin position="628"/>
        <end position="663"/>
    </location>
</feature>
<feature type="region of interest" description="Disordered" evidence="4">
    <location>
        <begin position="168"/>
        <end position="270"/>
    </location>
</feature>
<feature type="compositionally biased region" description="Basic and acidic residues" evidence="4">
    <location>
        <begin position="171"/>
        <end position="184"/>
    </location>
</feature>
<feature type="compositionally biased region" description="Polar residues" evidence="4">
    <location>
        <begin position="201"/>
        <end position="218"/>
    </location>
</feature>
<feature type="compositionally biased region" description="Basic and acidic residues" evidence="4">
    <location>
        <begin position="219"/>
        <end position="247"/>
    </location>
</feature>
<feature type="compositionally biased region" description="Basic residues" evidence="4">
    <location>
        <begin position="248"/>
        <end position="258"/>
    </location>
</feature>
<comment type="function">
    <text evidence="1">Acts as a co-chaperone for HSP90 and is required for proper folding of the myosin motor domain.</text>
</comment>
<comment type="subunit">
    <text evidence="5 6">Interacts (via C-terminus) with O1 (PubMed:22892319). Interacts (via C-terminus) with OP10 (via N-terminus) (PubMed:27541862).</text>
</comment>
<reference key="1">
    <citation type="journal article" date="2009" name="Science">
        <title>The B73 maize genome: complexity, diversity, and dynamics.</title>
        <authorList>
            <person name="Schnable P.S."/>
            <person name="Ware D."/>
            <person name="Fulton R.S."/>
            <person name="Stein J.C."/>
            <person name="Wei F."/>
            <person name="Pasternak S."/>
            <person name="Liang C."/>
            <person name="Zhang J."/>
            <person name="Fulton L."/>
            <person name="Graves T.A."/>
            <person name="Minx P."/>
            <person name="Reily A.D."/>
            <person name="Courtney L."/>
            <person name="Kruchowski S.S."/>
            <person name="Tomlinson C."/>
            <person name="Strong C."/>
            <person name="Delehaunty K."/>
            <person name="Fronick C."/>
            <person name="Courtney B."/>
            <person name="Rock S.M."/>
            <person name="Belter E."/>
            <person name="Du F."/>
            <person name="Kim K."/>
            <person name="Abbott R.M."/>
            <person name="Cotton M."/>
            <person name="Levy A."/>
            <person name="Marchetto P."/>
            <person name="Ochoa K."/>
            <person name="Jackson S.M."/>
            <person name="Gillam B."/>
            <person name="Chen W."/>
            <person name="Yan L."/>
            <person name="Higginbotham J."/>
            <person name="Cardenas M."/>
            <person name="Waligorski J."/>
            <person name="Applebaum E."/>
            <person name="Phelps L."/>
            <person name="Falcone J."/>
            <person name="Kanchi K."/>
            <person name="Thane T."/>
            <person name="Scimone A."/>
            <person name="Thane N."/>
            <person name="Henke J."/>
            <person name="Wang T."/>
            <person name="Ruppert J."/>
            <person name="Shah N."/>
            <person name="Rotter K."/>
            <person name="Hodges J."/>
            <person name="Ingenthron E."/>
            <person name="Cordes M."/>
            <person name="Kohlberg S."/>
            <person name="Sgro J."/>
            <person name="Delgado B."/>
            <person name="Mead K."/>
            <person name="Chinwalla A."/>
            <person name="Leonard S."/>
            <person name="Crouse K."/>
            <person name="Collura K."/>
            <person name="Kudrna D."/>
            <person name="Currie J."/>
            <person name="He R."/>
            <person name="Angelova A."/>
            <person name="Rajasekar S."/>
            <person name="Mueller T."/>
            <person name="Lomeli R."/>
            <person name="Scara G."/>
            <person name="Ko A."/>
            <person name="Delaney K."/>
            <person name="Wissotski M."/>
            <person name="Lopez G."/>
            <person name="Campos D."/>
            <person name="Braidotti M."/>
            <person name="Ashley E."/>
            <person name="Golser W."/>
            <person name="Kim H."/>
            <person name="Lee S."/>
            <person name="Lin J."/>
            <person name="Dujmic Z."/>
            <person name="Kim W."/>
            <person name="Talag J."/>
            <person name="Zuccolo A."/>
            <person name="Fan C."/>
            <person name="Sebastian A."/>
            <person name="Kramer M."/>
            <person name="Spiegel L."/>
            <person name="Nascimento L."/>
            <person name="Zutavern T."/>
            <person name="Miller B."/>
            <person name="Ambroise C."/>
            <person name="Muller S."/>
            <person name="Spooner W."/>
            <person name="Narechania A."/>
            <person name="Ren L."/>
            <person name="Wei S."/>
            <person name="Kumari S."/>
            <person name="Faga B."/>
            <person name="Levy M.J."/>
            <person name="McMahan L."/>
            <person name="Van Buren P."/>
            <person name="Vaughn M.W."/>
            <person name="Ying K."/>
            <person name="Yeh C.-T."/>
            <person name="Emrich S.J."/>
            <person name="Jia Y."/>
            <person name="Kalyanaraman A."/>
            <person name="Hsia A.-P."/>
            <person name="Barbazuk W.B."/>
            <person name="Baucom R.S."/>
            <person name="Brutnell T.P."/>
            <person name="Carpita N.C."/>
            <person name="Chaparro C."/>
            <person name="Chia J.-M."/>
            <person name="Deragon J.-M."/>
            <person name="Estill J.C."/>
            <person name="Fu Y."/>
            <person name="Jeddeloh J.A."/>
            <person name="Han Y."/>
            <person name="Lee H."/>
            <person name="Li P."/>
            <person name="Lisch D.R."/>
            <person name="Liu S."/>
            <person name="Liu Z."/>
            <person name="Nagel D.H."/>
            <person name="McCann M.C."/>
            <person name="SanMiguel P."/>
            <person name="Myers A.M."/>
            <person name="Nettleton D."/>
            <person name="Nguyen J."/>
            <person name="Penning B.W."/>
            <person name="Ponnala L."/>
            <person name="Schneider K.L."/>
            <person name="Schwartz D.C."/>
            <person name="Sharma A."/>
            <person name="Soderlund C."/>
            <person name="Springer N.M."/>
            <person name="Sun Q."/>
            <person name="Wang H."/>
            <person name="Waterman M."/>
            <person name="Westerman R."/>
            <person name="Wolfgruber T.K."/>
            <person name="Yang L."/>
            <person name="Yu Y."/>
            <person name="Zhang L."/>
            <person name="Zhou S."/>
            <person name="Zhu Q."/>
            <person name="Bennetzen J.L."/>
            <person name="Dawe R.K."/>
            <person name="Jiang J."/>
            <person name="Jiang N."/>
            <person name="Presting G.G."/>
            <person name="Wessler S.R."/>
            <person name="Aluru S."/>
            <person name="Martienssen R.A."/>
            <person name="Clifton S.W."/>
            <person name="McCombie W.R."/>
            <person name="Wing R.A."/>
            <person name="Wilson R.K."/>
        </authorList>
    </citation>
    <scope>NUCLEOTIDE SEQUENCE [LARGE SCALE GENOMIC DNA]</scope>
    <source>
        <strain>cv. B73</strain>
    </source>
</reference>
<reference key="2">
    <citation type="journal article" date="2012" name="Plant Cell">
        <title>Opaque1 encodes a myosin XI motor protein that is required for endoplasmic reticulum motility and protein body formation in maize endosperm.</title>
        <authorList>
            <person name="Wang G."/>
            <person name="Wang F."/>
            <person name="Wang G."/>
            <person name="Wang F."/>
            <person name="Zhang X."/>
            <person name="Zhong M."/>
            <person name="Zhang J."/>
            <person name="Lin D."/>
            <person name="Tang Y."/>
            <person name="Xu Z."/>
            <person name="Song R."/>
        </authorList>
    </citation>
    <scope>INTERACTION WITH O1</scope>
</reference>
<reference key="3">
    <citation type="journal article" date="2016" name="PLoS Genet.">
        <title>Maize opaque10 encodes a cereal-specific protein that is essential for the proper distribution of zeins in endosperm protein bodies.</title>
        <authorList>
            <person name="Yao D."/>
            <person name="Qi W."/>
            <person name="Li X."/>
            <person name="Yang Q."/>
            <person name="Yan S."/>
            <person name="Ling H."/>
            <person name="Wang G."/>
            <person name="Wang G."/>
            <person name="Song R."/>
        </authorList>
    </citation>
    <scope>INTERACTION WITH OP10</scope>
</reference>
<sequence>MGKPPGARNPAEAEADGDDAVFLELSRELKEEGTRLFNRRDFEGAAFKYDKAVQLLPAGRRVEAAHLRASIAHCYMRMSPAEFHHAIHECNLALEAVPRYSRALLRRAACFEALGRPDLAWGDIRTVLRWEPGNRAARQISDRVRTALEDKGISVALDVLPEDENEIASAKGEERKKSRNKRFDSVAGGREGENGIALLESASTEKQAGPRQTNGTGNHQDHTEDSESNGLEKLEQSTETGEKDMGKKRGAHAAGKKPRCGESKQQKHSAVNHCQDNIGAKEEVMKDVKLVFGEDIRCAQMPANCSLPQLREIVQNKFPSLKAFLIKYKDKEEDLVTITLSEELSWASNLAVSQVPIRFYVVEVNHVQELGVDGVRRRPSFATLERNRDIMLDNGTIGHDVEHKHYADDWMVQFAQIFKNHVGFSSDAYLDLHDLGLRLHYEAMEDTIQREEAQEIFEVAESKFKEMAALALFNCGNVHMSRARRRPCLAEDPLQEFILEKVNVSYDWACTEYAKAGAMFEEAVKTKSDFFEGLIALGQQKFEQAKLSWYYALACKINMETEVLELFNHAEDNMEKGMDMWERMETLRLKGLSKPSKEKVVLEKMVLEGFVKDISADEAFEQASSIRSHINILWGTILYERSVVEFNLGLPSWEESLTVAMEKFKIGGASQADINVIVKNHCANETTQEGLSFKVEEIVQAWSEMHDAKNWRSGPLYFRLQPVFRRRAPKLHHILEHMHYA</sequence>
<dbReference type="EMBL" id="CM000786">
    <property type="protein sequence ID" value="AFW57122.1"/>
    <property type="molecule type" value="Genomic_DNA"/>
</dbReference>
<dbReference type="RefSeq" id="XP_008662790.1">
    <property type="nucleotide sequence ID" value="XM_008664568.1"/>
</dbReference>
<dbReference type="SMR" id="K7TQE3"/>
<dbReference type="FunCoup" id="K7TQE3">
    <property type="interactions" value="1"/>
</dbReference>
<dbReference type="STRING" id="4577.K7TQE3"/>
<dbReference type="PaxDb" id="4577-GRMZM2G023275_P01"/>
<dbReference type="EnsemblPlants" id="Zm00001eb414750_T001">
    <property type="protein sequence ID" value="Zm00001eb414750_P001"/>
    <property type="gene ID" value="Zm00001eb414750"/>
</dbReference>
<dbReference type="Gramene" id="Zm00001eb414750_T001">
    <property type="protein sequence ID" value="Zm00001eb414750_P001"/>
    <property type="gene ID" value="Zm00001eb414750"/>
</dbReference>
<dbReference type="KEGG" id="zma:103641203"/>
<dbReference type="eggNOG" id="KOG4151">
    <property type="taxonomic scope" value="Eukaryota"/>
</dbReference>
<dbReference type="HOGENOM" id="CLU_014258_0_0_1"/>
<dbReference type="InParanoid" id="K7TQE3"/>
<dbReference type="OMA" id="DELRWAY"/>
<dbReference type="OrthoDB" id="2942533at2759"/>
<dbReference type="Proteomes" id="UP000007305">
    <property type="component" value="Chromosome 10"/>
</dbReference>
<dbReference type="ExpressionAtlas" id="K7TQE3">
    <property type="expression patterns" value="baseline and differential"/>
</dbReference>
<dbReference type="CDD" id="cd05992">
    <property type="entry name" value="PB1"/>
    <property type="match status" value="1"/>
</dbReference>
<dbReference type="Gene3D" id="3.10.20.90">
    <property type="entry name" value="Phosphatidylinositol 3-kinase Catalytic Subunit, Chain A, domain 1"/>
    <property type="match status" value="1"/>
</dbReference>
<dbReference type="Gene3D" id="1.25.40.10">
    <property type="entry name" value="Tetratricopeptide repeat domain"/>
    <property type="match status" value="1"/>
</dbReference>
<dbReference type="InterPro" id="IPR000270">
    <property type="entry name" value="PB1_dom"/>
</dbReference>
<dbReference type="InterPro" id="IPR044517">
    <property type="entry name" value="PHOX1-4"/>
</dbReference>
<dbReference type="InterPro" id="IPR011990">
    <property type="entry name" value="TPR-like_helical_dom_sf"/>
</dbReference>
<dbReference type="PANTHER" id="PTHR46183:SF1">
    <property type="entry name" value="HSP-INTERACTING PROTEIN"/>
    <property type="match status" value="1"/>
</dbReference>
<dbReference type="PANTHER" id="PTHR46183">
    <property type="entry name" value="PROTEIN CLMP1"/>
    <property type="match status" value="1"/>
</dbReference>
<dbReference type="Pfam" id="PF00564">
    <property type="entry name" value="PB1"/>
    <property type="match status" value="1"/>
</dbReference>
<dbReference type="SMART" id="SM00666">
    <property type="entry name" value="PB1"/>
    <property type="match status" value="1"/>
</dbReference>
<dbReference type="SUPFAM" id="SSF54277">
    <property type="entry name" value="CAD &amp; PB1 domains"/>
    <property type="match status" value="1"/>
</dbReference>
<dbReference type="SUPFAM" id="SSF48452">
    <property type="entry name" value="TPR-like"/>
    <property type="match status" value="1"/>
</dbReference>
<dbReference type="PROSITE" id="PS50293">
    <property type="entry name" value="TPR_REGION"/>
    <property type="match status" value="1"/>
</dbReference>
<protein>
    <recommendedName>
        <fullName evidence="7">HSP-interacting protein</fullName>
    </recommendedName>
</protein>
<proteinExistence type="evidence at protein level"/>
<gene>
    <name evidence="7" type="primary">HIP</name>
    <name evidence="8" type="ORF">GRMZM2G023275</name>
    <name evidence="9" type="ORF">ZEAMMB73_165363</name>
    <name type="ORF">Zm.103901</name>
</gene>
<keyword id="KW-0143">Chaperone</keyword>
<keyword id="KW-1185">Reference proteome</keyword>
<keyword id="KW-0677">Repeat</keyword>
<keyword id="KW-0802">TPR repeat</keyword>